<organism>
    <name type="scientific">Arabidopsis thaliana</name>
    <name type="common">Mouse-ear cress</name>
    <dbReference type="NCBI Taxonomy" id="3702"/>
    <lineage>
        <taxon>Eukaryota</taxon>
        <taxon>Viridiplantae</taxon>
        <taxon>Streptophyta</taxon>
        <taxon>Embryophyta</taxon>
        <taxon>Tracheophyta</taxon>
        <taxon>Spermatophyta</taxon>
        <taxon>Magnoliopsida</taxon>
        <taxon>eudicotyledons</taxon>
        <taxon>Gunneridae</taxon>
        <taxon>Pentapetalae</taxon>
        <taxon>rosids</taxon>
        <taxon>malvids</taxon>
        <taxon>Brassicales</taxon>
        <taxon>Brassicaceae</taxon>
        <taxon>Camelineae</taxon>
        <taxon>Arabidopsis</taxon>
    </lineage>
</organism>
<gene>
    <name type="primary">NFYA4</name>
    <name type="ordered locus">At2g34720</name>
    <name type="ORF">T29F13.7</name>
</gene>
<reference key="1">
    <citation type="journal article" date="1999" name="Nature">
        <title>Sequence and analysis of chromosome 2 of the plant Arabidopsis thaliana.</title>
        <authorList>
            <person name="Lin X."/>
            <person name="Kaul S."/>
            <person name="Rounsley S.D."/>
            <person name="Shea T.P."/>
            <person name="Benito M.-I."/>
            <person name="Town C.D."/>
            <person name="Fujii C.Y."/>
            <person name="Mason T.M."/>
            <person name="Bowman C.L."/>
            <person name="Barnstead M.E."/>
            <person name="Feldblyum T.V."/>
            <person name="Buell C.R."/>
            <person name="Ketchum K.A."/>
            <person name="Lee J.J."/>
            <person name="Ronning C.M."/>
            <person name="Koo H.L."/>
            <person name="Moffat K.S."/>
            <person name="Cronin L.A."/>
            <person name="Shen M."/>
            <person name="Pai G."/>
            <person name="Van Aken S."/>
            <person name="Umayam L."/>
            <person name="Tallon L.J."/>
            <person name="Gill J.E."/>
            <person name="Adams M.D."/>
            <person name="Carrera A.J."/>
            <person name="Creasy T.H."/>
            <person name="Goodman H.M."/>
            <person name="Somerville C.R."/>
            <person name="Copenhaver G.P."/>
            <person name="Preuss D."/>
            <person name="Nierman W.C."/>
            <person name="White O."/>
            <person name="Eisen J.A."/>
            <person name="Salzberg S.L."/>
            <person name="Fraser C.M."/>
            <person name="Venter J.C."/>
        </authorList>
    </citation>
    <scope>NUCLEOTIDE SEQUENCE [LARGE SCALE GENOMIC DNA]</scope>
    <source>
        <strain>cv. Columbia</strain>
    </source>
</reference>
<reference key="2">
    <citation type="journal article" date="2017" name="Plant J.">
        <title>Araport11: a complete reannotation of the Arabidopsis thaliana reference genome.</title>
        <authorList>
            <person name="Cheng C.Y."/>
            <person name="Krishnakumar V."/>
            <person name="Chan A.P."/>
            <person name="Thibaud-Nissen F."/>
            <person name="Schobel S."/>
            <person name="Town C.D."/>
        </authorList>
    </citation>
    <scope>GENOME REANNOTATION</scope>
    <source>
        <strain>cv. Columbia</strain>
    </source>
</reference>
<reference key="3">
    <citation type="journal article" date="2003" name="Science">
        <title>Empirical analysis of transcriptional activity in the Arabidopsis genome.</title>
        <authorList>
            <person name="Yamada K."/>
            <person name="Lim J."/>
            <person name="Dale J.M."/>
            <person name="Chen H."/>
            <person name="Shinn P."/>
            <person name="Palm C.J."/>
            <person name="Southwick A.M."/>
            <person name="Wu H.C."/>
            <person name="Kim C.J."/>
            <person name="Nguyen M."/>
            <person name="Pham P.K."/>
            <person name="Cheuk R.F."/>
            <person name="Karlin-Newmann G."/>
            <person name="Liu S.X."/>
            <person name="Lam B."/>
            <person name="Sakano H."/>
            <person name="Wu T."/>
            <person name="Yu G."/>
            <person name="Miranda M."/>
            <person name="Quach H.L."/>
            <person name="Tripp M."/>
            <person name="Chang C.H."/>
            <person name="Lee J.M."/>
            <person name="Toriumi M.J."/>
            <person name="Chan M.M."/>
            <person name="Tang C.C."/>
            <person name="Onodera C.S."/>
            <person name="Deng J.M."/>
            <person name="Akiyama K."/>
            <person name="Ansari Y."/>
            <person name="Arakawa T."/>
            <person name="Banh J."/>
            <person name="Banno F."/>
            <person name="Bowser L."/>
            <person name="Brooks S.Y."/>
            <person name="Carninci P."/>
            <person name="Chao Q."/>
            <person name="Choy N."/>
            <person name="Enju A."/>
            <person name="Goldsmith A.D."/>
            <person name="Gurjal M."/>
            <person name="Hansen N.F."/>
            <person name="Hayashizaki Y."/>
            <person name="Johnson-Hopson C."/>
            <person name="Hsuan V.W."/>
            <person name="Iida K."/>
            <person name="Karnes M."/>
            <person name="Khan S."/>
            <person name="Koesema E."/>
            <person name="Ishida J."/>
            <person name="Jiang P.X."/>
            <person name="Jones T."/>
            <person name="Kawai J."/>
            <person name="Kamiya A."/>
            <person name="Meyers C."/>
            <person name="Nakajima M."/>
            <person name="Narusaka M."/>
            <person name="Seki M."/>
            <person name="Sakurai T."/>
            <person name="Satou M."/>
            <person name="Tamse R."/>
            <person name="Vaysberg M."/>
            <person name="Wallender E.K."/>
            <person name="Wong C."/>
            <person name="Yamamura Y."/>
            <person name="Yuan S."/>
            <person name="Shinozaki K."/>
            <person name="Davis R.W."/>
            <person name="Theologis A."/>
            <person name="Ecker J.R."/>
        </authorList>
    </citation>
    <scope>NUCLEOTIDE SEQUENCE [LARGE SCALE MRNA]</scope>
    <source>
        <strain>cv. Columbia</strain>
    </source>
</reference>
<reference key="4">
    <citation type="journal article" date="2001" name="Gene">
        <title>Regulation of the CCAAT-binding NF-Y subunits in Arabidopsis thaliana.</title>
        <authorList>
            <person name="Gusmaroli G."/>
            <person name="Tonelli C."/>
            <person name="Mantovani R."/>
        </authorList>
    </citation>
    <scope>TISSUE SPECIFICITY</scope>
</reference>
<reference key="5">
    <citation type="journal article" date="2002" name="Gene">
        <title>Regulation of novel members of the Arabidopsis thaliana CCAAT-binding nuclear factor Y subunits.</title>
        <authorList>
            <person name="Gusmaroli G."/>
            <person name="Tonelli C."/>
            <person name="Mantovani R."/>
        </authorList>
    </citation>
    <scope>GENE FAMILY</scope>
    <scope>NOMENCLATURE</scope>
</reference>
<name>NFYA4_ARATH</name>
<protein>
    <recommendedName>
        <fullName>Nuclear transcription factor Y subunit A-4</fullName>
        <shortName>AtNF-YA-4</shortName>
    </recommendedName>
</protein>
<keyword id="KW-0010">Activator</keyword>
<keyword id="KW-0238">DNA-binding</keyword>
<keyword id="KW-0539">Nucleus</keyword>
<keyword id="KW-1185">Reference proteome</keyword>
<keyword id="KW-0804">Transcription</keyword>
<keyword id="KW-0805">Transcription regulation</keyword>
<sequence length="198" mass="22259">MTSSVHELSDNNESHAKKERPDSQTRPQVPSGRSSESIDTNSVYSEPMAHGLYPYPDPYYRSVFAQQAYLPHPYPGVQLQLMGMQQPGVPLQCDAVEEPVFVNAKQYHGILRRRQSRAKLEARNRAIKAKKPYMHESRHLHAIRRPRGCGGRFLNAKKENGDHKEEEEATSDENTSEASSSLRSEKLAMATSGPNGRS</sequence>
<feature type="chain" id="PRO_0000198774" description="Nuclear transcription factor Y subunit A-4">
    <location>
        <begin position="1"/>
        <end position="198"/>
    </location>
</feature>
<feature type="DNA-binding region" description="NFYA/HAP2-type" evidence="2">
    <location>
        <begin position="131"/>
        <end position="156"/>
    </location>
</feature>
<feature type="region of interest" description="Disordered" evidence="3">
    <location>
        <begin position="1"/>
        <end position="47"/>
    </location>
</feature>
<feature type="region of interest" description="Disordered" evidence="3">
    <location>
        <begin position="136"/>
        <end position="198"/>
    </location>
</feature>
<feature type="short sequence motif" description="Subunit association domain (SAD)">
    <location>
        <begin position="101"/>
        <end position="124"/>
    </location>
</feature>
<feature type="compositionally biased region" description="Basic and acidic residues" evidence="3">
    <location>
        <begin position="7"/>
        <end position="23"/>
    </location>
</feature>
<feature type="compositionally biased region" description="Polar residues" evidence="3">
    <location>
        <begin position="24"/>
        <end position="44"/>
    </location>
</feature>
<feature type="compositionally biased region" description="Basic and acidic residues" evidence="3">
    <location>
        <begin position="156"/>
        <end position="166"/>
    </location>
</feature>
<dbReference type="EMBL" id="AC003096">
    <property type="protein sequence ID" value="AAC16262.1"/>
    <property type="status" value="ALT_SEQ"/>
    <property type="molecule type" value="Genomic_DNA"/>
</dbReference>
<dbReference type="EMBL" id="CP002685">
    <property type="protein sequence ID" value="AEC09013.1"/>
    <property type="molecule type" value="Genomic_DNA"/>
</dbReference>
<dbReference type="EMBL" id="AY072414">
    <property type="protein sequence ID" value="AAL62406.1"/>
    <property type="molecule type" value="mRNA"/>
</dbReference>
<dbReference type="EMBL" id="AY114711">
    <property type="protein sequence ID" value="AAM48030.1"/>
    <property type="molecule type" value="mRNA"/>
</dbReference>
<dbReference type="PIR" id="T01363">
    <property type="entry name" value="T01363"/>
</dbReference>
<dbReference type="SMR" id="Q8VY64"/>
<dbReference type="BioGRID" id="3383">
    <property type="interactions" value="34"/>
</dbReference>
<dbReference type="FunCoup" id="Q8VY64">
    <property type="interactions" value="33"/>
</dbReference>
<dbReference type="IntAct" id="Q8VY64">
    <property type="interactions" value="27"/>
</dbReference>
<dbReference type="STRING" id="3702.Q8VY64"/>
<dbReference type="iPTMnet" id="Q8VY64"/>
<dbReference type="PaxDb" id="3702-AT2G34720.1"/>
<dbReference type="ProteomicsDB" id="251160"/>
<dbReference type="EnsemblPlants" id="AT2G34720.1">
    <property type="protein sequence ID" value="AT2G34720.1"/>
    <property type="gene ID" value="AT2G34720"/>
</dbReference>
<dbReference type="GeneID" id="818037"/>
<dbReference type="Gramene" id="AT2G34720.1">
    <property type="protein sequence ID" value="AT2G34720.1"/>
    <property type="gene ID" value="AT2G34720"/>
</dbReference>
<dbReference type="KEGG" id="ath:AT2G34720"/>
<dbReference type="Araport" id="AT2G34720"/>
<dbReference type="TAIR" id="AT2G34720">
    <property type="gene designation" value="NF-YA4"/>
</dbReference>
<dbReference type="eggNOG" id="KOG1561">
    <property type="taxonomic scope" value="Eukaryota"/>
</dbReference>
<dbReference type="HOGENOM" id="CLU_065504_1_0_1"/>
<dbReference type="InParanoid" id="Q8VY64"/>
<dbReference type="OMA" id="RHMHALR"/>
<dbReference type="OrthoDB" id="1097733at2759"/>
<dbReference type="PhylomeDB" id="Q8VY64"/>
<dbReference type="PRO" id="PR:Q8VY64"/>
<dbReference type="Proteomes" id="UP000006548">
    <property type="component" value="Chromosome 2"/>
</dbReference>
<dbReference type="ExpressionAtlas" id="Q8VY64">
    <property type="expression patterns" value="baseline and differential"/>
</dbReference>
<dbReference type="GO" id="GO:0016602">
    <property type="term" value="C:CCAAT-binding factor complex"/>
    <property type="evidence" value="ECO:0007669"/>
    <property type="project" value="InterPro"/>
</dbReference>
<dbReference type="GO" id="GO:0005634">
    <property type="term" value="C:nucleus"/>
    <property type="evidence" value="ECO:0007005"/>
    <property type="project" value="TAIR"/>
</dbReference>
<dbReference type="GO" id="GO:0003677">
    <property type="term" value="F:DNA binding"/>
    <property type="evidence" value="ECO:0007669"/>
    <property type="project" value="UniProtKB-KW"/>
</dbReference>
<dbReference type="GO" id="GO:0003700">
    <property type="term" value="F:DNA-binding transcription factor activity"/>
    <property type="evidence" value="ECO:0000250"/>
    <property type="project" value="TAIR"/>
</dbReference>
<dbReference type="GO" id="GO:0045892">
    <property type="term" value="P:negative regulation of DNA-templated transcription"/>
    <property type="evidence" value="ECO:0000314"/>
    <property type="project" value="TAIR"/>
</dbReference>
<dbReference type="GO" id="GO:0048510">
    <property type="term" value="P:regulation of timing of transition from vegetative to reproductive phase"/>
    <property type="evidence" value="ECO:0000315"/>
    <property type="project" value="TAIR"/>
</dbReference>
<dbReference type="Gene3D" id="6.10.250.2430">
    <property type="match status" value="1"/>
</dbReference>
<dbReference type="InterPro" id="IPR018362">
    <property type="entry name" value="CCAAT-binding_factor_CS"/>
</dbReference>
<dbReference type="InterPro" id="IPR001289">
    <property type="entry name" value="NFYA"/>
</dbReference>
<dbReference type="PANTHER" id="PTHR12632">
    <property type="entry name" value="TRANSCRIPTION FACTOR NF-Y ALPHA-RELATED"/>
    <property type="match status" value="1"/>
</dbReference>
<dbReference type="Pfam" id="PF02045">
    <property type="entry name" value="CBFB_NFYA"/>
    <property type="match status" value="1"/>
</dbReference>
<dbReference type="PRINTS" id="PR00616">
    <property type="entry name" value="CCAATSUBUNTB"/>
</dbReference>
<dbReference type="SMART" id="SM00521">
    <property type="entry name" value="CBF"/>
    <property type="match status" value="1"/>
</dbReference>
<dbReference type="PROSITE" id="PS00686">
    <property type="entry name" value="NFYA_HAP2_1"/>
    <property type="match status" value="1"/>
</dbReference>
<dbReference type="PROSITE" id="PS51152">
    <property type="entry name" value="NFYA_HAP2_2"/>
    <property type="match status" value="1"/>
</dbReference>
<comment type="function">
    <text evidence="1">Stimulates the transcription of various genes by recognizing and binding to a CCAAT motif in promoters.</text>
</comment>
<comment type="subunit">
    <text evidence="1">Heterotrimeric transcription factor composed of three components, NF-YA, NF-YB and NF-YC. NF-YB and NF-YC must interact and dimerize for NF-YA association and DNA binding (By similarity).</text>
</comment>
<comment type="interaction">
    <interactant intactId="EBI-4461713">
        <id>Q8VY64</id>
    </interactant>
    <interactant intactId="EBI-962511">
        <id>A9LNK9</id>
        <label>CPSF30</label>
    </interactant>
    <organismsDiffer>false</organismsDiffer>
    <experiments>4</experiments>
</comment>
<comment type="interaction">
    <interactant intactId="EBI-4461713">
        <id>Q8VY64</id>
    </interactant>
    <interactant intactId="EBI-4452064">
        <id>O23310</id>
        <label>NFYB3</label>
    </interactant>
    <organismsDiffer>false</organismsDiffer>
    <experiments>3</experiments>
</comment>
<comment type="interaction">
    <interactant intactId="EBI-4461713">
        <id>Q8VY64</id>
    </interactant>
    <interactant intactId="EBI-2466050">
        <id>Q8L4B2</id>
        <label>NFYC9</label>
    </interactant>
    <organismsDiffer>false</organismsDiffer>
    <experiments>4</experiments>
</comment>
<comment type="interaction">
    <interactant intactId="EBI-4461713">
        <id>Q8VY64</id>
    </interactant>
    <interactant intactId="EBI-4424877">
        <id>Q9S7W5</id>
        <label>TCP13</label>
    </interactant>
    <organismsDiffer>false</organismsDiffer>
    <experiments>3</experiments>
</comment>
<comment type="interaction">
    <interactant intactId="EBI-4461713">
        <id>Q8VY64</id>
    </interactant>
    <interactant intactId="EBI-9838721">
        <id>O64647</id>
        <label>TCP9</label>
    </interactant>
    <organismsDiffer>false</organismsDiffer>
    <experiments>3</experiments>
</comment>
<comment type="subcellular location">
    <subcellularLocation>
        <location evidence="5">Nucleus</location>
    </subcellularLocation>
</comment>
<comment type="tissue specificity">
    <text evidence="4">Expressed in stems, caulines, and senescent flowers.</text>
</comment>
<comment type="similarity">
    <text evidence="2">Belongs to the NFYA/HAP2 subunit family.</text>
</comment>
<comment type="sequence caution" evidence="5">
    <conflict type="erroneous gene model prediction">
        <sequence resource="EMBL-CDS" id="AAC16262"/>
    </conflict>
</comment>
<evidence type="ECO:0000250" key="1"/>
<evidence type="ECO:0000255" key="2">
    <source>
        <dbReference type="PROSITE-ProRule" id="PRU00966"/>
    </source>
</evidence>
<evidence type="ECO:0000256" key="3">
    <source>
        <dbReference type="SAM" id="MobiDB-lite"/>
    </source>
</evidence>
<evidence type="ECO:0000269" key="4">
    <source>
    </source>
</evidence>
<evidence type="ECO:0000305" key="5"/>
<accession>Q8VY64</accession>
<accession>O64585</accession>
<proteinExistence type="evidence at protein level"/>